<accession>Q71F23</accession>
<accession>A2RRD9</accession>
<accession>Q09GN2</accession>
<accession>Q32Q71</accession>
<accession>Q9H5G1</accession>
<comment type="function">
    <text evidence="4 9 10">Component of the CENPA-NAC (nucleosome-associated) complex, a complex that plays a central role in assembly of kinetochore proteins, mitotic progression and chromosome segregation. The CENPA-NAC complex recruits the CENPA-CAD (nucleosome distal) complex and may be involved in incorporation of newly synthesized CENPA into centromeres. Plays an important role in the correct PLK1 localization to the mitotic kinetochores. A scaffold protein responsible for the initial recruitment and maintenance of the kinetochore PLK1 population until its degradation. Involved in transcriptional repression.</text>
</comment>
<comment type="subunit">
    <text evidence="5 7 8 10">Component of the CENPA-NAC complex, at least composed of CENPA, CENPC, CENPH, CENPM, CENPN, CENPT and CENPU. The CENPA-NAC complex interacts with the CENPA-CAD complex, composed of CENPI, CENPK, CENPL, CENPO, CENPP, CENPQ, CENPR and CENPS. Interacts with MLF1. Interacts with PLK1.</text>
</comment>
<comment type="subunit">
    <text evidence="4">(Microbial infection) Interacts with the N-terminal domain of Kaposi's sarcoma-associated herpesvirus latent nuclear antigen (LNA).</text>
</comment>
<comment type="interaction">
    <interactant intactId="EBI-2515234">
        <id>Q71F23</id>
    </interactant>
    <interactant intactId="EBI-2350265">
        <id>Q7L2Z9</id>
        <label>CENPQ</label>
    </interactant>
    <organismsDiffer>false</organismsDiffer>
    <experiments>5</experiments>
</comment>
<comment type="interaction">
    <interactant intactId="EBI-2515234">
        <id>Q71F23</id>
    </interactant>
    <interactant intactId="EBI-712105">
        <id>Q13352</id>
        <label>ITGB3BP</label>
    </interactant>
    <organismsDiffer>false</organismsDiffer>
    <experiments>5</experiments>
</comment>
<comment type="interaction">
    <interactant intactId="EBI-2515234">
        <id>Q71F23</id>
    </interactant>
    <interactant intactId="EBI-347978">
        <id>P37198</id>
        <label>NUP62</label>
    </interactant>
    <organismsDiffer>false</organismsDiffer>
    <experiments>4</experiments>
</comment>
<comment type="interaction">
    <interactant intactId="EBI-2515234">
        <id>Q71F23</id>
    </interactant>
    <interactant intactId="EBI-1105213">
        <id>Q9UBB9</id>
        <label>TFIP11</label>
    </interactant>
    <organismsDiffer>false</organismsDiffer>
    <experiments>4</experiments>
</comment>
<comment type="interaction">
    <interactant intactId="EBI-15793375">
        <id>Q71F23-1</id>
    </interactant>
    <interactant intactId="EBI-476768">
        <id>P53350</id>
        <label>PLK1</label>
    </interactant>
    <organismsDiffer>false</organismsDiffer>
    <experiments>5</experiments>
</comment>
<comment type="subcellular location">
    <subcellularLocation>
        <location>Cytoplasm</location>
    </subcellularLocation>
    <subcellularLocation>
        <location>Nucleus</location>
    </subcellularLocation>
    <subcellularLocation>
        <location>Chromosome</location>
        <location>Centromere</location>
        <location>Kinetochore</location>
    </subcellularLocation>
    <text>Localizes in the kinetochore domain of centromeres. Colocalizes with PLK1 at the interzone between the inner and the outer kinetochore plates.</text>
</comment>
<comment type="alternative products">
    <event type="alternative splicing"/>
    <isoform>
        <id>Q71F23-1</id>
        <name>1</name>
        <sequence type="displayed"/>
    </isoform>
    <isoform>
        <id>Q71F23-2</id>
        <name>2</name>
        <sequence type="described" ref="VSP_020030"/>
    </isoform>
    <isoform>
        <id>Q71F23-3</id>
        <name>3</name>
        <sequence type="described" ref="VSP_053526 VSP_053527"/>
    </isoform>
</comment>
<comment type="tissue specificity">
    <text evidence="4 5 6">Expressed at high levels in the testis, fetal liver, thymus, bone marrow and at lower levels in the lymph nodes, placenta, colon and spleen. Present in all cell lines examined, including B-cells, T-cells, epithelial cells and fibroblast cells. Expressed at high levels in glioblastoma cell lines.</text>
</comment>
<comment type="PTM">
    <text evidence="10">Phosphorylated by PLK1 at Thr-78, creating a self-tethering site that specifically interacts with the polo-box domain of PLK1.</text>
</comment>
<comment type="similarity">
    <text evidence="15">Belongs to the CENP-U/AME1 family.</text>
</comment>
<sequence>MAPRGRRRPRPHRSEGARRSKNTLERTHSMKDKAGQKCKPIDVFDFPDNSDVSSIGRLGENEKDEETYETFDPPLHSTAIYADEEEFSKHCGLSLSSTPPGKEAKRSSDTSGNEASEIESVKISAKKPGRKLRPISDDSESIEESDTRRKVKSAEKISTQRHEVIRTTASSELSEKPAESVTSKKTGPLSAQPSVEKENLAIESQSKTQKKGKISHDKRKKSRSKAIGSDTSDIVHIWCPEGMKTSDIKELNIVLPEFEKTHLEHQQRIESKVCKAAIATFYVNVKEQFIKMLKESQMLTNLKRKNAKMISDIEKKRQRMIEVQDELLRLEPQLKQLQTKYDELKERKSSLRNAAYFLSNLKQLYQDYSDVQAQEPNVKETYDSSSLPALLFKARTLLGAESHLRNINHQLEKLLDQG</sequence>
<organism>
    <name type="scientific">Homo sapiens</name>
    <name type="common">Human</name>
    <dbReference type="NCBI Taxonomy" id="9606"/>
    <lineage>
        <taxon>Eukaryota</taxon>
        <taxon>Metazoa</taxon>
        <taxon>Chordata</taxon>
        <taxon>Craniata</taxon>
        <taxon>Vertebrata</taxon>
        <taxon>Euteleostomi</taxon>
        <taxon>Mammalia</taxon>
        <taxon>Eutheria</taxon>
        <taxon>Euarchontoglires</taxon>
        <taxon>Primates</taxon>
        <taxon>Haplorrhini</taxon>
        <taxon>Catarrhini</taxon>
        <taxon>Hominidae</taxon>
        <taxon>Homo</taxon>
    </lineage>
</organism>
<feature type="chain" id="PRO_0000247672" description="Centromere protein U">
    <location>
        <begin position="1"/>
        <end position="418"/>
    </location>
</feature>
<feature type="region of interest" description="Disordered" evidence="3">
    <location>
        <begin position="1"/>
        <end position="76"/>
    </location>
</feature>
<feature type="region of interest" description="Disordered" evidence="3">
    <location>
        <begin position="88"/>
        <end position="227"/>
    </location>
</feature>
<feature type="coiled-coil region" evidence="2">
    <location>
        <begin position="297"/>
        <end position="356"/>
    </location>
</feature>
<feature type="coiled-coil region" evidence="2">
    <location>
        <begin position="397"/>
        <end position="417"/>
    </location>
</feature>
<feature type="short sequence motif" description="Nuclear localization signal" evidence="2">
    <location>
        <begin position="6"/>
        <end position="23"/>
    </location>
</feature>
<feature type="short sequence motif" description="Nuclear localization signal" evidence="2">
    <location>
        <begin position="303"/>
        <end position="320"/>
    </location>
</feature>
<feature type="compositionally biased region" description="Basic residues" evidence="3">
    <location>
        <begin position="1"/>
        <end position="11"/>
    </location>
</feature>
<feature type="compositionally biased region" description="Basic and acidic residues" evidence="3">
    <location>
        <begin position="12"/>
        <end position="42"/>
    </location>
</feature>
<feature type="compositionally biased region" description="Basic residues" evidence="3">
    <location>
        <begin position="124"/>
        <end position="133"/>
    </location>
</feature>
<feature type="compositionally biased region" description="Basic and acidic residues" evidence="3">
    <location>
        <begin position="145"/>
        <end position="165"/>
    </location>
</feature>
<feature type="compositionally biased region" description="Polar residues" evidence="3">
    <location>
        <begin position="180"/>
        <end position="193"/>
    </location>
</feature>
<feature type="compositionally biased region" description="Basic residues" evidence="3">
    <location>
        <begin position="208"/>
        <end position="224"/>
    </location>
</feature>
<feature type="modified residue" description="Phosphothreonine; by PLK1" evidence="10">
    <location>
        <position position="78"/>
    </location>
</feature>
<feature type="modified residue" description="Phosphothreonine" evidence="19">
    <location>
        <position position="98"/>
    </location>
</feature>
<feature type="modified residue" description="Phosphoserine" evidence="19">
    <location>
        <position position="108"/>
    </location>
</feature>
<feature type="modified residue" description="Phosphothreonine" evidence="16">
    <location>
        <position position="110"/>
    </location>
</feature>
<feature type="modified residue" description="Phosphoserine" evidence="16 17 19">
    <location>
        <position position="111"/>
    </location>
</feature>
<feature type="modified residue" description="Phosphoserine" evidence="1">
    <location>
        <position position="116"/>
    </location>
</feature>
<feature type="modified residue" description="Phosphoserine" evidence="1">
    <location>
        <position position="120"/>
    </location>
</feature>
<feature type="modified residue" description="Phosphoserine" evidence="16">
    <location>
        <position position="136"/>
    </location>
</feature>
<feature type="modified residue" description="Phosphoserine" evidence="16 19">
    <location>
        <position position="139"/>
    </location>
</feature>
<feature type="modified residue" description="Phosphoserine" evidence="16 19">
    <location>
        <position position="141"/>
    </location>
</feature>
<feature type="modified residue" description="Phosphoserine" evidence="1">
    <location>
        <position position="190"/>
    </location>
</feature>
<feature type="modified residue" description="Phosphoserine" evidence="18 19">
    <location>
        <position position="194"/>
    </location>
</feature>
<feature type="modified residue" description="Phosphoserine" evidence="19">
    <location>
        <position position="232"/>
    </location>
</feature>
<feature type="cross-link" description="Glycyl lysine isopeptide (Lys-Gly) (interchain with G-Cter in SUMO2)" evidence="20">
    <location>
        <position position="185"/>
    </location>
</feature>
<feature type="splice variant" id="VSP_020030" description="In isoform 2." evidence="11 12 13">
    <location>
        <begin position="1"/>
        <end position="242"/>
    </location>
</feature>
<feature type="splice variant" id="VSP_053526" description="In isoform 3." evidence="14">
    <original>EPQLKQL</original>
    <variation>WTGAGLW</variation>
    <location>
        <begin position="331"/>
        <end position="337"/>
    </location>
</feature>
<feature type="splice variant" id="VSP_053527" description="In isoform 3." evidence="14">
    <location>
        <begin position="338"/>
        <end position="418"/>
    </location>
</feature>
<feature type="sequence variant" id="VAR_048692" description="In dbSNP:rs902174.">
    <original>G</original>
    <variation>R</variation>
    <location>
        <position position="16"/>
    </location>
</feature>
<feature type="sequence variant" id="VAR_027144" description="In dbSNP:rs902174.">
    <original>G</original>
    <variation>S</variation>
    <location>
        <position position="16"/>
    </location>
</feature>
<feature type="sequence variant" id="VAR_027145" description="In dbSNP:rs6552804.">
    <original>I</original>
    <variation>T</variation>
    <location>
        <position position="157"/>
    </location>
</feature>
<feature type="sequence variant" id="VAR_027146" description="In dbSNP:rs4616798.">
    <original>I</original>
    <variation>M</variation>
    <location>
        <position position="214"/>
    </location>
</feature>
<feature type="sequence variant" id="VAR_048693" description="In dbSNP:rs34007339.">
    <original>A</original>
    <variation>T</variation>
    <location>
        <position position="279"/>
    </location>
</feature>
<feature type="mutagenesis site" description="Insensitive to PLK1-induced degradation." evidence="10">
    <original>S</original>
    <variation>A</variation>
    <location>
        <position position="77"/>
    </location>
</feature>
<feature type="mutagenesis site" description="Insensitive to PLK1-induced degradation." evidence="10">
    <original>T</original>
    <variation>A</variation>
    <location>
        <position position="78"/>
    </location>
</feature>
<feature type="mutagenesis site" description="Failed to enhance the PLK1-dependent degradation." evidence="10">
    <original>T</original>
    <variation>D</variation>
    <location>
        <position position="78"/>
    </location>
</feature>
<feature type="mutagenesis site" description="Failed to enhance the PLK1-dependent degradation." evidence="10">
    <original>T</original>
    <variation>E</variation>
    <location>
        <position position="78"/>
    </location>
</feature>
<feature type="sequence conflict" description="In Ref. 8; AAI07745." evidence="15" ref="8">
    <original>E</original>
    <variation>G</variation>
    <location>
        <position position="163"/>
    </location>
</feature>
<feature type="helix" evidence="21">
    <location>
        <begin position="254"/>
        <end position="266"/>
    </location>
</feature>
<feature type="helix" evidence="21">
    <location>
        <begin position="272"/>
        <end position="368"/>
    </location>
</feature>
<feature type="helix" evidence="21">
    <location>
        <begin position="371"/>
        <end position="374"/>
    </location>
</feature>
<feature type="helix" evidence="21">
    <location>
        <begin position="384"/>
        <end position="386"/>
    </location>
</feature>
<feature type="helix" evidence="21">
    <location>
        <begin position="387"/>
        <end position="398"/>
    </location>
</feature>
<feature type="helix" evidence="21">
    <location>
        <begin position="400"/>
        <end position="414"/>
    </location>
</feature>
<gene>
    <name type="primary">CENPU</name>
    <name type="synonym">ICEN24</name>
    <name type="synonym">KLIP1</name>
    <name type="synonym">MLF1IP</name>
    <name type="synonym">PBIP1</name>
</gene>
<evidence type="ECO:0000250" key="1">
    <source>
        <dbReference type="UniProtKB" id="Q8C4M7"/>
    </source>
</evidence>
<evidence type="ECO:0000255" key="2"/>
<evidence type="ECO:0000256" key="3">
    <source>
        <dbReference type="SAM" id="MobiDB-lite"/>
    </source>
</evidence>
<evidence type="ECO:0000269" key="4">
    <source>
    </source>
</evidence>
<evidence type="ECO:0000269" key="5">
    <source>
    </source>
</evidence>
<evidence type="ECO:0000269" key="6">
    <source>
    </source>
</evidence>
<evidence type="ECO:0000269" key="7">
    <source>
    </source>
</evidence>
<evidence type="ECO:0000269" key="8">
    <source>
    </source>
</evidence>
<evidence type="ECO:0000269" key="9">
    <source>
    </source>
</evidence>
<evidence type="ECO:0000269" key="10">
    <source>
    </source>
</evidence>
<evidence type="ECO:0000303" key="11">
    <source>
    </source>
</evidence>
<evidence type="ECO:0000303" key="12">
    <source>
    </source>
</evidence>
<evidence type="ECO:0000303" key="13">
    <source ref="4"/>
</evidence>
<evidence type="ECO:0000303" key="14">
    <source ref="5"/>
</evidence>
<evidence type="ECO:0000305" key="15"/>
<evidence type="ECO:0007744" key="16">
    <source>
    </source>
</evidence>
<evidence type="ECO:0007744" key="17">
    <source>
    </source>
</evidence>
<evidence type="ECO:0007744" key="18">
    <source>
    </source>
</evidence>
<evidence type="ECO:0007744" key="19">
    <source>
    </source>
</evidence>
<evidence type="ECO:0007744" key="20">
    <source>
    </source>
</evidence>
<evidence type="ECO:0007829" key="21">
    <source>
        <dbReference type="PDB" id="7R5S"/>
    </source>
</evidence>
<keyword id="KW-0002">3D-structure</keyword>
<keyword id="KW-0025">Alternative splicing</keyword>
<keyword id="KW-0137">Centromere</keyword>
<keyword id="KW-0158">Chromosome</keyword>
<keyword id="KW-0175">Coiled coil</keyword>
<keyword id="KW-0963">Cytoplasm</keyword>
<keyword id="KW-0945">Host-virus interaction</keyword>
<keyword id="KW-1017">Isopeptide bond</keyword>
<keyword id="KW-0995">Kinetochore</keyword>
<keyword id="KW-0539">Nucleus</keyword>
<keyword id="KW-0597">Phosphoprotein</keyword>
<keyword id="KW-1267">Proteomics identification</keyword>
<keyword id="KW-1185">Reference proteome</keyword>
<keyword id="KW-0678">Repressor</keyword>
<keyword id="KW-0804">Transcription</keyword>
<keyword id="KW-0805">Transcription regulation</keyword>
<keyword id="KW-0832">Ubl conjugation</keyword>
<dbReference type="EMBL" id="AF469667">
    <property type="protein sequence ID" value="AAQ05290.1"/>
    <property type="molecule type" value="mRNA"/>
</dbReference>
<dbReference type="EMBL" id="AF516710">
    <property type="protein sequence ID" value="AAQ08228.1"/>
    <property type="molecule type" value="mRNA"/>
</dbReference>
<dbReference type="EMBL" id="AK027121">
    <property type="protein sequence ID" value="BAB15665.1"/>
    <property type="molecule type" value="mRNA"/>
</dbReference>
<dbReference type="EMBL" id="CR457376">
    <property type="protein sequence ID" value="CAG33657.1"/>
    <property type="molecule type" value="mRNA"/>
</dbReference>
<dbReference type="EMBL" id="DQ907910">
    <property type="protein sequence ID" value="ABI49142.1"/>
    <property type="molecule type" value="mRNA"/>
</dbReference>
<dbReference type="EMBL" id="AC079257">
    <property type="status" value="NOT_ANNOTATED_CDS"/>
    <property type="molecule type" value="Genomic_DNA"/>
</dbReference>
<dbReference type="EMBL" id="CH471056">
    <property type="protein sequence ID" value="EAX04666.1"/>
    <property type="molecule type" value="Genomic_DNA"/>
</dbReference>
<dbReference type="EMBL" id="BC107744">
    <property type="protein sequence ID" value="AAI07745.1"/>
    <property type="molecule type" value="mRNA"/>
</dbReference>
<dbReference type="EMBL" id="BC031520">
    <property type="protein sequence ID" value="AAH31520.1"/>
    <property type="molecule type" value="mRNA"/>
</dbReference>
<dbReference type="EMBL" id="BC131556">
    <property type="protein sequence ID" value="AAI31557.1"/>
    <property type="molecule type" value="mRNA"/>
</dbReference>
<dbReference type="CCDS" id="CCDS3838.1">
    <molecule id="Q71F23-1"/>
</dbReference>
<dbReference type="RefSeq" id="NP_078905.2">
    <molecule id="Q71F23-1"/>
    <property type="nucleotide sequence ID" value="NM_024629.3"/>
</dbReference>
<dbReference type="PDB" id="7PB8">
    <property type="method" value="X-ray"/>
    <property type="resolution" value="3.68 A"/>
    <property type="chains" value="U=1-418"/>
</dbReference>
<dbReference type="PDB" id="7PKN">
    <property type="method" value="EM"/>
    <property type="resolution" value="3.20 A"/>
    <property type="chains" value="U=1-418"/>
</dbReference>
<dbReference type="PDB" id="7QOO">
    <property type="method" value="EM"/>
    <property type="resolution" value="4.60 A"/>
    <property type="chains" value="U=1-418"/>
</dbReference>
<dbReference type="PDB" id="7R5S">
    <property type="method" value="EM"/>
    <property type="resolution" value="2.83 A"/>
    <property type="chains" value="U=1-418"/>
</dbReference>
<dbReference type="PDB" id="7R5V">
    <property type="method" value="EM"/>
    <property type="resolution" value="4.55 A"/>
    <property type="chains" value="U=1-418"/>
</dbReference>
<dbReference type="PDB" id="7XHN">
    <property type="method" value="EM"/>
    <property type="resolution" value="3.71 A"/>
    <property type="chains" value="U=1-418"/>
</dbReference>
<dbReference type="PDB" id="7XHO">
    <property type="method" value="EM"/>
    <property type="resolution" value="3.29 A"/>
    <property type="chains" value="U=1-418"/>
</dbReference>
<dbReference type="PDB" id="7YWX">
    <property type="method" value="EM"/>
    <property type="resolution" value="12.00 A"/>
    <property type="chains" value="U=1-418"/>
</dbReference>
<dbReference type="PDB" id="7YYH">
    <property type="method" value="EM"/>
    <property type="resolution" value="8.90 A"/>
    <property type="chains" value="U=1-418"/>
</dbReference>
<dbReference type="PDB" id="8K4D">
    <property type="method" value="X-ray"/>
    <property type="resolution" value="3.52 A"/>
    <property type="chains" value="C=41-49"/>
</dbReference>
<dbReference type="PDBsum" id="7PB8"/>
<dbReference type="PDBsum" id="7PKN"/>
<dbReference type="PDBsum" id="7QOO"/>
<dbReference type="PDBsum" id="7R5S"/>
<dbReference type="PDBsum" id="7R5V"/>
<dbReference type="PDBsum" id="7XHN"/>
<dbReference type="PDBsum" id="7XHO"/>
<dbReference type="PDBsum" id="7YWX"/>
<dbReference type="PDBsum" id="7YYH"/>
<dbReference type="PDBsum" id="8K4D"/>
<dbReference type="EMDB" id="EMD-13473"/>
<dbReference type="EMDB" id="EMD-14098"/>
<dbReference type="EMDB" id="EMD-14336"/>
<dbReference type="EMDB" id="EMD-14341"/>
<dbReference type="EMDB" id="EMD-14351"/>
<dbReference type="EMDB" id="EMD-14375"/>
<dbReference type="EMDB" id="EMD-33196"/>
<dbReference type="EMDB" id="EMD-33197"/>
<dbReference type="SMR" id="Q71F23"/>
<dbReference type="BioGRID" id="122805">
    <property type="interactions" value="110"/>
</dbReference>
<dbReference type="ComplexPortal" id="CPX-5646">
    <property type="entry name" value="Kinetochore CCAN complex"/>
</dbReference>
<dbReference type="CORUM" id="Q71F23"/>
<dbReference type="DIP" id="DIP-48539N"/>
<dbReference type="FunCoup" id="Q71F23">
    <property type="interactions" value="2167"/>
</dbReference>
<dbReference type="IntAct" id="Q71F23">
    <property type="interactions" value="97"/>
</dbReference>
<dbReference type="MINT" id="Q71F23"/>
<dbReference type="STRING" id="9606.ENSP00000281453"/>
<dbReference type="GlyGen" id="Q71F23">
    <property type="glycosylation" value="2 sites, 1 O-linked glycan (2 sites)"/>
</dbReference>
<dbReference type="iPTMnet" id="Q71F23"/>
<dbReference type="PhosphoSitePlus" id="Q71F23"/>
<dbReference type="BioMuta" id="CENPU"/>
<dbReference type="DMDM" id="74712714"/>
<dbReference type="jPOST" id="Q71F23"/>
<dbReference type="MassIVE" id="Q71F23"/>
<dbReference type="PaxDb" id="9606-ENSP00000281453"/>
<dbReference type="PeptideAtlas" id="Q71F23"/>
<dbReference type="ProteomicsDB" id="58731"/>
<dbReference type="ProteomicsDB" id="68598">
    <molecule id="Q71F23-1"/>
</dbReference>
<dbReference type="ProteomicsDB" id="68599">
    <molecule id="Q71F23-2"/>
</dbReference>
<dbReference type="Pumba" id="Q71F23"/>
<dbReference type="Antibodypedia" id="17397">
    <property type="antibodies" value="293 antibodies from 31 providers"/>
</dbReference>
<dbReference type="DNASU" id="79682"/>
<dbReference type="Ensembl" id="ENST00000281453.10">
    <molecule id="Q71F23-1"/>
    <property type="protein sequence ID" value="ENSP00000281453.5"/>
    <property type="gene ID" value="ENSG00000151725.12"/>
</dbReference>
<dbReference type="GeneID" id="79682"/>
<dbReference type="KEGG" id="hsa:79682"/>
<dbReference type="MANE-Select" id="ENST00000281453.10">
    <property type="protein sequence ID" value="ENSP00000281453.5"/>
    <property type="RefSeq nucleotide sequence ID" value="NM_024629.4"/>
    <property type="RefSeq protein sequence ID" value="NP_078905.2"/>
</dbReference>
<dbReference type="UCSC" id="uc003iwq.4">
    <molecule id="Q71F23-1"/>
    <property type="organism name" value="human"/>
</dbReference>
<dbReference type="AGR" id="HGNC:21348"/>
<dbReference type="CTD" id="79682"/>
<dbReference type="DisGeNET" id="79682"/>
<dbReference type="GeneCards" id="CENPU"/>
<dbReference type="HGNC" id="HGNC:21348">
    <property type="gene designation" value="CENPU"/>
</dbReference>
<dbReference type="HPA" id="ENSG00000151725">
    <property type="expression patterns" value="Tissue enhanced (bone marrow, testis)"/>
</dbReference>
<dbReference type="MIM" id="611511">
    <property type="type" value="gene"/>
</dbReference>
<dbReference type="neXtProt" id="NX_Q71F23"/>
<dbReference type="OpenTargets" id="ENSG00000151725"/>
<dbReference type="PharmGKB" id="PA134893791"/>
<dbReference type="VEuPathDB" id="HostDB:ENSG00000151725"/>
<dbReference type="eggNOG" id="ENOG502S1IM">
    <property type="taxonomic scope" value="Eukaryota"/>
</dbReference>
<dbReference type="GeneTree" id="ENSGT00390000015511"/>
<dbReference type="HOGENOM" id="CLU_057340_1_0_1"/>
<dbReference type="InParanoid" id="Q71F23"/>
<dbReference type="OMA" id="NTVGRTH"/>
<dbReference type="OrthoDB" id="8959258at2759"/>
<dbReference type="PAN-GO" id="Q71F23">
    <property type="GO annotations" value="1 GO annotation based on evolutionary models"/>
</dbReference>
<dbReference type="PhylomeDB" id="Q71F23"/>
<dbReference type="TreeFam" id="TF330780"/>
<dbReference type="PathwayCommons" id="Q71F23"/>
<dbReference type="Reactome" id="R-HSA-141444">
    <property type="pathway name" value="Amplification of signal from unattached kinetochores via a MAD2 inhibitory signal"/>
</dbReference>
<dbReference type="Reactome" id="R-HSA-2467813">
    <property type="pathway name" value="Separation of Sister Chromatids"/>
</dbReference>
<dbReference type="Reactome" id="R-HSA-2500257">
    <property type="pathway name" value="Resolution of Sister Chromatid Cohesion"/>
</dbReference>
<dbReference type="Reactome" id="R-HSA-5663220">
    <property type="pathway name" value="RHO GTPases Activate Formins"/>
</dbReference>
<dbReference type="Reactome" id="R-HSA-606279">
    <property type="pathway name" value="Deposition of new CENPA-containing nucleosomes at the centromere"/>
</dbReference>
<dbReference type="Reactome" id="R-HSA-68877">
    <property type="pathway name" value="Mitotic Prometaphase"/>
</dbReference>
<dbReference type="Reactome" id="R-HSA-9648025">
    <property type="pathway name" value="EML4 and NUDC in mitotic spindle formation"/>
</dbReference>
<dbReference type="SignaLink" id="Q71F23"/>
<dbReference type="SIGNOR" id="Q71F23"/>
<dbReference type="BioGRID-ORCS" id="79682">
    <property type="hits" value="57 hits in 1156 CRISPR screens"/>
</dbReference>
<dbReference type="ChiTaRS" id="CENPU">
    <property type="organism name" value="human"/>
</dbReference>
<dbReference type="GeneWiki" id="MLF1IP"/>
<dbReference type="GenomeRNAi" id="79682"/>
<dbReference type="Pharos" id="Q71F23">
    <property type="development level" value="Tbio"/>
</dbReference>
<dbReference type="PRO" id="PR:Q71F23"/>
<dbReference type="Proteomes" id="UP000005640">
    <property type="component" value="Chromosome 4"/>
</dbReference>
<dbReference type="RNAct" id="Q71F23">
    <property type="molecule type" value="protein"/>
</dbReference>
<dbReference type="Bgee" id="ENSG00000151725">
    <property type="expression patterns" value="Expressed in sperm and 166 other cell types or tissues"/>
</dbReference>
<dbReference type="ExpressionAtlas" id="Q71F23">
    <property type="expression patterns" value="baseline and differential"/>
</dbReference>
<dbReference type="GO" id="GO:0034451">
    <property type="term" value="C:centriolar satellite"/>
    <property type="evidence" value="ECO:0000314"/>
    <property type="project" value="HPA"/>
</dbReference>
<dbReference type="GO" id="GO:0005829">
    <property type="term" value="C:cytosol"/>
    <property type="evidence" value="ECO:0000304"/>
    <property type="project" value="Reactome"/>
</dbReference>
<dbReference type="GO" id="GO:0000939">
    <property type="term" value="C:inner kinetochore"/>
    <property type="evidence" value="ECO:0000353"/>
    <property type="project" value="ComplexPortal"/>
</dbReference>
<dbReference type="GO" id="GO:0005654">
    <property type="term" value="C:nucleoplasm"/>
    <property type="evidence" value="ECO:0000314"/>
    <property type="project" value="HPA"/>
</dbReference>
<dbReference type="GO" id="GO:0005634">
    <property type="term" value="C:nucleus"/>
    <property type="evidence" value="ECO:0000318"/>
    <property type="project" value="GO_Central"/>
</dbReference>
<dbReference type="GO" id="GO:0043009">
    <property type="term" value="P:chordate embryonic development"/>
    <property type="evidence" value="ECO:0007669"/>
    <property type="project" value="Ensembl"/>
</dbReference>
<dbReference type="GO" id="GO:0007059">
    <property type="term" value="P:chromosome segregation"/>
    <property type="evidence" value="ECO:0000303"/>
    <property type="project" value="ComplexPortal"/>
</dbReference>
<dbReference type="InterPro" id="IPR025214">
    <property type="entry name" value="CENP-U"/>
</dbReference>
<dbReference type="PANTHER" id="PTHR32222">
    <property type="entry name" value="CENTROMERE PROTEIN U"/>
    <property type="match status" value="1"/>
</dbReference>
<dbReference type="PANTHER" id="PTHR32222:SF1">
    <property type="entry name" value="CENTROMERE PROTEIN U"/>
    <property type="match status" value="1"/>
</dbReference>
<dbReference type="Pfam" id="PF13097">
    <property type="entry name" value="CENP-U"/>
    <property type="match status" value="1"/>
</dbReference>
<protein>
    <recommendedName>
        <fullName>Centromere protein U</fullName>
        <shortName>CENP-U</shortName>
    </recommendedName>
    <alternativeName>
        <fullName>Centromere protein of 50 kDa</fullName>
        <shortName>CENP-50</shortName>
    </alternativeName>
    <alternativeName>
        <fullName>Interphase centromere complex protein 24</fullName>
    </alternativeName>
    <alternativeName>
        <fullName>KSHV latent nuclear antigen-interacting protein 1</fullName>
    </alternativeName>
    <alternativeName>
        <fullName>MLF1-interacting protein</fullName>
    </alternativeName>
    <alternativeName>
        <fullName>Polo-box-interacting protein 1</fullName>
    </alternativeName>
</protein>
<reference key="1">
    <citation type="journal article" date="2003" name="J. Virol.">
        <title>Identification of a novel cellular transcriptional repressor interacting with the latent nuclear antigen of Kaposi's sarcoma-associated herpesvirus.</title>
        <authorList>
            <person name="Pan H.-Y."/>
            <person name="Zhang Y.-J."/>
            <person name="Wang X.-P."/>
            <person name="Deng J.-H."/>
            <person name="Zhou F.-C."/>
            <person name="Gao S.-J."/>
        </authorList>
    </citation>
    <scope>NUCLEOTIDE SEQUENCE [MRNA] (ISOFORM 1)</scope>
    <scope>FUNCTION</scope>
    <scope>SUBCELLULAR LOCATION</scope>
    <scope>TISSUE SPECIFICITY</scope>
    <scope>INTERACTION WITH KAPOSI'S SARCOMA-ASSOCIATED HERPESVIRUS LATENT NUCLEAR ANTIGEN (MICROBIAL INFECTION)</scope>
</reference>
<reference key="2">
    <citation type="journal article" date="2004" name="Oncogene">
        <title>cDNA cloning and characterization of a novel gene encoding the MLF1-interacting protein MLF1IP.</title>
        <authorList>
            <person name="Hanissian S.H."/>
            <person name="Akbar U."/>
            <person name="Teng B."/>
            <person name="Janjetovic Z."/>
            <person name="Hoffmann A."/>
            <person name="Hitzler J.K."/>
            <person name="Iscove N."/>
            <person name="Hamre K."/>
            <person name="Du X."/>
            <person name="Tong Y."/>
            <person name="Mukatira S."/>
            <person name="Robertson J.H."/>
            <person name="Morris S.W."/>
        </authorList>
    </citation>
    <scope>NUCLEOTIDE SEQUENCE [MRNA] (ISOFORM 1)</scope>
    <scope>SUBCELLULAR LOCATION</scope>
    <scope>TISSUE SPECIFICITY</scope>
    <scope>INTERACTION WITH MLF1</scope>
</reference>
<reference key="3">
    <citation type="journal article" date="2004" name="Nat. Genet.">
        <title>Complete sequencing and characterization of 21,243 full-length human cDNAs.</title>
        <authorList>
            <person name="Ota T."/>
            <person name="Suzuki Y."/>
            <person name="Nishikawa T."/>
            <person name="Otsuki T."/>
            <person name="Sugiyama T."/>
            <person name="Irie R."/>
            <person name="Wakamatsu A."/>
            <person name="Hayashi K."/>
            <person name="Sato H."/>
            <person name="Nagai K."/>
            <person name="Kimura K."/>
            <person name="Makita H."/>
            <person name="Sekine M."/>
            <person name="Obayashi M."/>
            <person name="Nishi T."/>
            <person name="Shibahara T."/>
            <person name="Tanaka T."/>
            <person name="Ishii S."/>
            <person name="Yamamoto J."/>
            <person name="Saito K."/>
            <person name="Kawai Y."/>
            <person name="Isono Y."/>
            <person name="Nakamura Y."/>
            <person name="Nagahari K."/>
            <person name="Murakami K."/>
            <person name="Yasuda T."/>
            <person name="Iwayanagi T."/>
            <person name="Wagatsuma M."/>
            <person name="Shiratori A."/>
            <person name="Sudo H."/>
            <person name="Hosoiri T."/>
            <person name="Kaku Y."/>
            <person name="Kodaira H."/>
            <person name="Kondo H."/>
            <person name="Sugawara M."/>
            <person name="Takahashi M."/>
            <person name="Kanda K."/>
            <person name="Yokoi T."/>
            <person name="Furuya T."/>
            <person name="Kikkawa E."/>
            <person name="Omura Y."/>
            <person name="Abe K."/>
            <person name="Kamihara K."/>
            <person name="Katsuta N."/>
            <person name="Sato K."/>
            <person name="Tanikawa M."/>
            <person name="Yamazaki M."/>
            <person name="Ninomiya K."/>
            <person name="Ishibashi T."/>
            <person name="Yamashita H."/>
            <person name="Murakawa K."/>
            <person name="Fujimori K."/>
            <person name="Tanai H."/>
            <person name="Kimata M."/>
            <person name="Watanabe M."/>
            <person name="Hiraoka S."/>
            <person name="Chiba Y."/>
            <person name="Ishida S."/>
            <person name="Ono Y."/>
            <person name="Takiguchi S."/>
            <person name="Watanabe S."/>
            <person name="Yosida M."/>
            <person name="Hotuta T."/>
            <person name="Kusano J."/>
            <person name="Kanehori K."/>
            <person name="Takahashi-Fujii A."/>
            <person name="Hara H."/>
            <person name="Tanase T.-O."/>
            <person name="Nomura Y."/>
            <person name="Togiya S."/>
            <person name="Komai F."/>
            <person name="Hara R."/>
            <person name="Takeuchi K."/>
            <person name="Arita M."/>
            <person name="Imose N."/>
            <person name="Musashino K."/>
            <person name="Yuuki H."/>
            <person name="Oshima A."/>
            <person name="Sasaki N."/>
            <person name="Aotsuka S."/>
            <person name="Yoshikawa Y."/>
            <person name="Matsunawa H."/>
            <person name="Ichihara T."/>
            <person name="Shiohata N."/>
            <person name="Sano S."/>
            <person name="Moriya S."/>
            <person name="Momiyama H."/>
            <person name="Satoh N."/>
            <person name="Takami S."/>
            <person name="Terashima Y."/>
            <person name="Suzuki O."/>
            <person name="Nakagawa S."/>
            <person name="Senoh A."/>
            <person name="Mizoguchi H."/>
            <person name="Goto Y."/>
            <person name="Shimizu F."/>
            <person name="Wakebe H."/>
            <person name="Hishigaki H."/>
            <person name="Watanabe T."/>
            <person name="Sugiyama A."/>
            <person name="Takemoto M."/>
            <person name="Kawakami B."/>
            <person name="Yamazaki M."/>
            <person name="Watanabe K."/>
            <person name="Kumagai A."/>
            <person name="Itakura S."/>
            <person name="Fukuzumi Y."/>
            <person name="Fujimori Y."/>
            <person name="Komiyama M."/>
            <person name="Tashiro H."/>
            <person name="Tanigami A."/>
            <person name="Fujiwara T."/>
            <person name="Ono T."/>
            <person name="Yamada K."/>
            <person name="Fujii Y."/>
            <person name="Ozaki K."/>
            <person name="Hirao M."/>
            <person name="Ohmori Y."/>
            <person name="Kawabata A."/>
            <person name="Hikiji T."/>
            <person name="Kobatake N."/>
            <person name="Inagaki H."/>
            <person name="Ikema Y."/>
            <person name="Okamoto S."/>
            <person name="Okitani R."/>
            <person name="Kawakami T."/>
            <person name="Noguchi S."/>
            <person name="Itoh T."/>
            <person name="Shigeta K."/>
            <person name="Senba T."/>
            <person name="Matsumura K."/>
            <person name="Nakajima Y."/>
            <person name="Mizuno T."/>
            <person name="Morinaga M."/>
            <person name="Sasaki M."/>
            <person name="Togashi T."/>
            <person name="Oyama M."/>
            <person name="Hata H."/>
            <person name="Watanabe M."/>
            <person name="Komatsu T."/>
            <person name="Mizushima-Sugano J."/>
            <person name="Satoh T."/>
            <person name="Shirai Y."/>
            <person name="Takahashi Y."/>
            <person name="Nakagawa K."/>
            <person name="Okumura K."/>
            <person name="Nagase T."/>
            <person name="Nomura N."/>
            <person name="Kikuchi H."/>
            <person name="Masuho Y."/>
            <person name="Yamashita R."/>
            <person name="Nakai K."/>
            <person name="Yada T."/>
            <person name="Nakamura Y."/>
            <person name="Ohara O."/>
            <person name="Isogai T."/>
            <person name="Sugano S."/>
        </authorList>
    </citation>
    <scope>NUCLEOTIDE SEQUENCE [LARGE SCALE MRNA] (ISOFORM 2)</scope>
    <source>
        <tissue>Small intestine</tissue>
    </source>
</reference>
<reference key="4">
    <citation type="submission" date="2004-06" db="EMBL/GenBank/DDBJ databases">
        <title>Cloning of human full open reading frames in Gateway(TM) system entry vector (pDONR201).</title>
        <authorList>
            <person name="Ebert L."/>
            <person name="Schick M."/>
            <person name="Neubert P."/>
            <person name="Schatten R."/>
            <person name="Henze S."/>
            <person name="Korn B."/>
        </authorList>
    </citation>
    <scope>NUCLEOTIDE SEQUENCE [LARGE SCALE MRNA] (ISOFORM 2)</scope>
</reference>
<reference key="5">
    <citation type="submission" date="2006-08" db="EMBL/GenBank/DDBJ databases">
        <title>Role of alternatively spliced MLF1IP isoforms in brain tumor pathogenesis.</title>
        <authorList>
            <person name="Hanissian S.H."/>
        </authorList>
    </citation>
    <scope>NUCLEOTIDE SEQUENCE [LARGE SCALE MRNA] (ISOFORM 3)</scope>
    <source>
        <tissue>Glioblastoma</tissue>
    </source>
</reference>
<reference key="6">
    <citation type="journal article" date="2005" name="Nature">
        <title>Generation and annotation of the DNA sequences of human chromosomes 2 and 4.</title>
        <authorList>
            <person name="Hillier L.W."/>
            <person name="Graves T.A."/>
            <person name="Fulton R.S."/>
            <person name="Fulton L.A."/>
            <person name="Pepin K.H."/>
            <person name="Minx P."/>
            <person name="Wagner-McPherson C."/>
            <person name="Layman D."/>
            <person name="Wylie K."/>
            <person name="Sekhon M."/>
            <person name="Becker M.C."/>
            <person name="Fewell G.A."/>
            <person name="Delehaunty K.D."/>
            <person name="Miner T.L."/>
            <person name="Nash W.E."/>
            <person name="Kremitzki C."/>
            <person name="Oddy L."/>
            <person name="Du H."/>
            <person name="Sun H."/>
            <person name="Bradshaw-Cordum H."/>
            <person name="Ali J."/>
            <person name="Carter J."/>
            <person name="Cordes M."/>
            <person name="Harris A."/>
            <person name="Isak A."/>
            <person name="van Brunt A."/>
            <person name="Nguyen C."/>
            <person name="Du F."/>
            <person name="Courtney L."/>
            <person name="Kalicki J."/>
            <person name="Ozersky P."/>
            <person name="Abbott S."/>
            <person name="Armstrong J."/>
            <person name="Belter E.A."/>
            <person name="Caruso L."/>
            <person name="Cedroni M."/>
            <person name="Cotton M."/>
            <person name="Davidson T."/>
            <person name="Desai A."/>
            <person name="Elliott G."/>
            <person name="Erb T."/>
            <person name="Fronick C."/>
            <person name="Gaige T."/>
            <person name="Haakenson W."/>
            <person name="Haglund K."/>
            <person name="Holmes A."/>
            <person name="Harkins R."/>
            <person name="Kim K."/>
            <person name="Kruchowski S.S."/>
            <person name="Strong C.M."/>
            <person name="Grewal N."/>
            <person name="Goyea E."/>
            <person name="Hou S."/>
            <person name="Levy A."/>
            <person name="Martinka S."/>
            <person name="Mead K."/>
            <person name="McLellan M.D."/>
            <person name="Meyer R."/>
            <person name="Randall-Maher J."/>
            <person name="Tomlinson C."/>
            <person name="Dauphin-Kohlberg S."/>
            <person name="Kozlowicz-Reilly A."/>
            <person name="Shah N."/>
            <person name="Swearengen-Shahid S."/>
            <person name="Snider J."/>
            <person name="Strong J.T."/>
            <person name="Thompson J."/>
            <person name="Yoakum M."/>
            <person name="Leonard S."/>
            <person name="Pearman C."/>
            <person name="Trani L."/>
            <person name="Radionenko M."/>
            <person name="Waligorski J.E."/>
            <person name="Wang C."/>
            <person name="Rock S.M."/>
            <person name="Tin-Wollam A.-M."/>
            <person name="Maupin R."/>
            <person name="Latreille P."/>
            <person name="Wendl M.C."/>
            <person name="Yang S.-P."/>
            <person name="Pohl C."/>
            <person name="Wallis J.W."/>
            <person name="Spieth J."/>
            <person name="Bieri T.A."/>
            <person name="Berkowicz N."/>
            <person name="Nelson J.O."/>
            <person name="Osborne J."/>
            <person name="Ding L."/>
            <person name="Meyer R."/>
            <person name="Sabo A."/>
            <person name="Shotland Y."/>
            <person name="Sinha P."/>
            <person name="Wohldmann P.E."/>
            <person name="Cook L.L."/>
            <person name="Hickenbotham M.T."/>
            <person name="Eldred J."/>
            <person name="Williams D."/>
            <person name="Jones T.A."/>
            <person name="She X."/>
            <person name="Ciccarelli F.D."/>
            <person name="Izaurralde E."/>
            <person name="Taylor J."/>
            <person name="Schmutz J."/>
            <person name="Myers R.M."/>
            <person name="Cox D.R."/>
            <person name="Huang X."/>
            <person name="McPherson J.D."/>
            <person name="Mardis E.R."/>
            <person name="Clifton S.W."/>
            <person name="Warren W.C."/>
            <person name="Chinwalla A.T."/>
            <person name="Eddy S.R."/>
            <person name="Marra M.A."/>
            <person name="Ovcharenko I."/>
            <person name="Furey T.S."/>
            <person name="Miller W."/>
            <person name="Eichler E.E."/>
            <person name="Bork P."/>
            <person name="Suyama M."/>
            <person name="Torrents D."/>
            <person name="Waterston R.H."/>
            <person name="Wilson R.K."/>
        </authorList>
    </citation>
    <scope>NUCLEOTIDE SEQUENCE [LARGE SCALE GENOMIC DNA]</scope>
</reference>
<reference key="7">
    <citation type="submission" date="2005-09" db="EMBL/GenBank/DDBJ databases">
        <authorList>
            <person name="Mural R.J."/>
            <person name="Istrail S."/>
            <person name="Sutton G.G."/>
            <person name="Florea L."/>
            <person name="Halpern A.L."/>
            <person name="Mobarry C.M."/>
            <person name="Lippert R."/>
            <person name="Walenz B."/>
            <person name="Shatkay H."/>
            <person name="Dew I."/>
            <person name="Miller J.R."/>
            <person name="Flanigan M.J."/>
            <person name="Edwards N.J."/>
            <person name="Bolanos R."/>
            <person name="Fasulo D."/>
            <person name="Halldorsson B.V."/>
            <person name="Hannenhalli S."/>
            <person name="Turner R."/>
            <person name="Yooseph S."/>
            <person name="Lu F."/>
            <person name="Nusskern D.R."/>
            <person name="Shue B.C."/>
            <person name="Zheng X.H."/>
            <person name="Zhong F."/>
            <person name="Delcher A.L."/>
            <person name="Huson D.H."/>
            <person name="Kravitz S.A."/>
            <person name="Mouchard L."/>
            <person name="Reinert K."/>
            <person name="Remington K.A."/>
            <person name="Clark A.G."/>
            <person name="Waterman M.S."/>
            <person name="Eichler E.E."/>
            <person name="Adams M.D."/>
            <person name="Hunkapiller M.W."/>
            <person name="Myers E.W."/>
            <person name="Venter J.C."/>
        </authorList>
    </citation>
    <scope>NUCLEOTIDE SEQUENCE [LARGE SCALE GENOMIC DNA]</scope>
</reference>
<reference key="8">
    <citation type="journal article" date="2004" name="Genome Res.">
        <title>The status, quality, and expansion of the NIH full-length cDNA project: the Mammalian Gene Collection (MGC).</title>
        <authorList>
            <consortium name="The MGC Project Team"/>
        </authorList>
    </citation>
    <scope>NUCLEOTIDE SEQUENCE [LARGE SCALE MRNA] (ISOFORMS 1 AND 2)</scope>
    <source>
        <tissue>Adrenal cortex</tissue>
        <tissue>Testis</tissue>
    </source>
</reference>
<reference key="9">
    <citation type="journal article" date="2005" name="Brain Res.">
        <title>Regulation of myeloid leukemia factor-1 interacting protein (MLF1IP) expression in glioblastoma.</title>
        <authorList>
            <person name="Hanissian S.H."/>
            <person name="Teng B."/>
            <person name="Akbar U."/>
            <person name="Janjetovic Z."/>
            <person name="Zhou Q."/>
            <person name="Duntsch C."/>
            <person name="Robertson J.H."/>
        </authorList>
    </citation>
    <scope>SUBCELLULAR LOCATION</scope>
    <scope>TISSUE SPECIFICITY</scope>
</reference>
<reference key="10">
    <citation type="journal article" date="2006" name="Genes Cells">
        <title>Comprehensive analysis of the ICEN (Interphase Centromere Complex) components enriched in the CENP-A chromatin of human cells.</title>
        <authorList>
            <person name="Izuta H."/>
            <person name="Ikeno M."/>
            <person name="Suzuki N."/>
            <person name="Tomonaga T."/>
            <person name="Nozaki N."/>
            <person name="Obuse C."/>
            <person name="Kisu Y."/>
            <person name="Goshima N."/>
            <person name="Nomura F."/>
            <person name="Nomura N."/>
            <person name="Yoda K."/>
        </authorList>
    </citation>
    <scope>FUNCTION</scope>
    <scope>SUBCELLULAR LOCATION</scope>
</reference>
<reference key="11">
    <citation type="journal article" date="2006" name="Nat. Cell Biol.">
        <title>The CENP-H-I complex is required for the efficient incorporation of newly synthesized CENP-A into centromeres.</title>
        <authorList>
            <person name="Okada M."/>
            <person name="Cheeseman I.M."/>
            <person name="Hori T."/>
            <person name="Okawa K."/>
            <person name="McLeod I.X."/>
            <person name="Yates J.R. III"/>
            <person name="Desai A."/>
            <person name="Fukagawa T."/>
        </authorList>
    </citation>
    <scope>IDENTIFICATION IN A COMPLEX WITH CENPH; CENPI; CENPK; CENPN; CENPO; CENPP; CENPQ AND CENPR</scope>
</reference>
<reference key="12">
    <citation type="journal article" date="2006" name="Nat. Cell Biol.">
        <title>The human CENP-A centromeric nucleosome-associated complex.</title>
        <authorList>
            <person name="Foltz D.R."/>
            <person name="Jansen L.E.T."/>
            <person name="Black B.E."/>
            <person name="Bailey A.O."/>
            <person name="Yates J.R. III"/>
            <person name="Cleveland D.W."/>
        </authorList>
    </citation>
    <scope>IDENTIFICATION IN THE CENPA-NAC COMPLEX WITH CENPA; CENPC; CENPH; CENPM; CENPN AND CENPT</scope>
</reference>
<reference key="13">
    <citation type="journal article" date="2006" name="Mol. Cell">
        <title>Self-regulated Plk1 recruitment to kinetochores by the Plk1-PBIP1 interaction is critical for proper chromosome segregation.</title>
        <authorList>
            <person name="Kang Y.H."/>
            <person name="Park J.-E."/>
            <person name="Yu L.-R."/>
            <person name="Soung N.-K."/>
            <person name="Yun S.-M."/>
            <person name="Bang J.K."/>
            <person name="Seong Y.-S."/>
            <person name="Yu H."/>
            <person name="Garfield S."/>
            <person name="Veenstra T.D."/>
            <person name="Lee K.S."/>
        </authorList>
    </citation>
    <scope>IDENTIFICATION</scope>
    <scope>FUNCTION</scope>
    <scope>SUBCELLULAR LOCATION</scope>
    <scope>INTERACTION WITH PLK1</scope>
    <scope>PHOSPHORYLATION AT THR-78</scope>
    <scope>MUTAGENESIS OF SER-77 AND THR-78</scope>
</reference>
<reference key="14">
    <citation type="journal article" date="2008" name="Proc. Natl. Acad. Sci. U.S.A.">
        <title>A quantitative atlas of mitotic phosphorylation.</title>
        <authorList>
            <person name="Dephoure N."/>
            <person name="Zhou C."/>
            <person name="Villen J."/>
            <person name="Beausoleil S.A."/>
            <person name="Bakalarski C.E."/>
            <person name="Elledge S.J."/>
            <person name="Gygi S.P."/>
        </authorList>
    </citation>
    <scope>PHOSPHORYLATION [LARGE SCALE ANALYSIS] AT THR-110; SER-111; SER-136; SER-139 AND SER-141</scope>
    <scope>IDENTIFICATION BY MASS SPECTROMETRY [LARGE SCALE ANALYSIS]</scope>
    <source>
        <tissue>Cervix carcinoma</tissue>
    </source>
</reference>
<reference key="15">
    <citation type="journal article" date="2009" name="Sci. Signal.">
        <title>Quantitative phosphoproteomic analysis of T cell receptor signaling reveals system-wide modulation of protein-protein interactions.</title>
        <authorList>
            <person name="Mayya V."/>
            <person name="Lundgren D.H."/>
            <person name="Hwang S.-I."/>
            <person name="Rezaul K."/>
            <person name="Wu L."/>
            <person name="Eng J.K."/>
            <person name="Rodionov V."/>
            <person name="Han D.K."/>
        </authorList>
    </citation>
    <scope>PHOSPHORYLATION [LARGE SCALE ANALYSIS] AT SER-111</scope>
    <scope>IDENTIFICATION BY MASS SPECTROMETRY [LARGE SCALE ANALYSIS]</scope>
    <source>
        <tissue>Leukemic T-cell</tissue>
    </source>
</reference>
<reference key="16">
    <citation type="journal article" date="2010" name="Sci. Signal.">
        <title>Quantitative phosphoproteomics reveals widespread full phosphorylation site occupancy during mitosis.</title>
        <authorList>
            <person name="Olsen J.V."/>
            <person name="Vermeulen M."/>
            <person name="Santamaria A."/>
            <person name="Kumar C."/>
            <person name="Miller M.L."/>
            <person name="Jensen L.J."/>
            <person name="Gnad F."/>
            <person name="Cox J."/>
            <person name="Jensen T.S."/>
            <person name="Nigg E.A."/>
            <person name="Brunak S."/>
            <person name="Mann M."/>
        </authorList>
    </citation>
    <scope>PHOSPHORYLATION [LARGE SCALE ANALYSIS] AT SER-194</scope>
    <scope>IDENTIFICATION BY MASS SPECTROMETRY [LARGE SCALE ANALYSIS]</scope>
    <source>
        <tissue>Cervix carcinoma</tissue>
    </source>
</reference>
<reference key="17">
    <citation type="journal article" date="2011" name="BMC Syst. Biol.">
        <title>Initial characterization of the human central proteome.</title>
        <authorList>
            <person name="Burkard T.R."/>
            <person name="Planyavsky M."/>
            <person name="Kaupe I."/>
            <person name="Breitwieser F.P."/>
            <person name="Buerckstuemmer T."/>
            <person name="Bennett K.L."/>
            <person name="Superti-Furga G."/>
            <person name="Colinge J."/>
        </authorList>
    </citation>
    <scope>IDENTIFICATION BY MASS SPECTROMETRY [LARGE SCALE ANALYSIS]</scope>
</reference>
<reference key="18">
    <citation type="journal article" date="2011" name="Sci. Signal.">
        <title>System-wide temporal characterization of the proteome and phosphoproteome of human embryonic stem cell differentiation.</title>
        <authorList>
            <person name="Rigbolt K.T."/>
            <person name="Prokhorova T.A."/>
            <person name="Akimov V."/>
            <person name="Henningsen J."/>
            <person name="Johansen P.T."/>
            <person name="Kratchmarova I."/>
            <person name="Kassem M."/>
            <person name="Mann M."/>
            <person name="Olsen J.V."/>
            <person name="Blagoev B."/>
        </authorList>
    </citation>
    <scope>IDENTIFICATION BY MASS SPECTROMETRY [LARGE SCALE ANALYSIS]</scope>
</reference>
<reference key="19">
    <citation type="journal article" date="2013" name="J. Proteome Res.">
        <title>Toward a comprehensive characterization of a human cancer cell phosphoproteome.</title>
        <authorList>
            <person name="Zhou H."/>
            <person name="Di Palma S."/>
            <person name="Preisinger C."/>
            <person name="Peng M."/>
            <person name="Polat A.N."/>
            <person name="Heck A.J."/>
            <person name="Mohammed S."/>
        </authorList>
    </citation>
    <scope>PHOSPHORYLATION [LARGE SCALE ANALYSIS] AT THR-98; SER-108; SER-111; SER-139; SER-141; SER-194 AND SER-232</scope>
    <scope>IDENTIFICATION BY MASS SPECTROMETRY [LARGE SCALE ANALYSIS]</scope>
    <source>
        <tissue>Cervix carcinoma</tissue>
        <tissue>Erythroleukemia</tissue>
    </source>
</reference>
<reference key="20">
    <citation type="journal article" date="2017" name="Nat. Struct. Mol. Biol.">
        <title>Site-specific mapping of the human SUMO proteome reveals co-modification with phosphorylation.</title>
        <authorList>
            <person name="Hendriks I.A."/>
            <person name="Lyon D."/>
            <person name="Young C."/>
            <person name="Jensen L.J."/>
            <person name="Vertegaal A.C."/>
            <person name="Nielsen M.L."/>
        </authorList>
    </citation>
    <scope>SUMOYLATION [LARGE SCALE ANALYSIS] AT LYS-185</scope>
    <scope>IDENTIFICATION BY MASS SPECTROMETRY [LARGE SCALE ANALYSIS]</scope>
</reference>
<proteinExistence type="evidence at protein level"/>
<name>CENPU_HUMAN</name>